<organism>
    <name type="scientific">Saccharolobus islandicus (strain M.16.4 / Kamchatka #3)</name>
    <name type="common">Sulfolobus islandicus</name>
    <dbReference type="NCBI Taxonomy" id="426118"/>
    <lineage>
        <taxon>Archaea</taxon>
        <taxon>Thermoproteota</taxon>
        <taxon>Thermoprotei</taxon>
        <taxon>Sulfolobales</taxon>
        <taxon>Sulfolobaceae</taxon>
        <taxon>Saccharolobus</taxon>
    </lineage>
</organism>
<evidence type="ECO:0000255" key="1">
    <source>
        <dbReference type="HAMAP-Rule" id="MF_00216"/>
    </source>
</evidence>
<feature type="chain" id="PRO_1000204222" description="Translation initiation factor 1A">
    <location>
        <begin position="1"/>
        <end position="108"/>
    </location>
</feature>
<feature type="domain" description="S1-like" evidence="1">
    <location>
        <begin position="11"/>
        <end position="85"/>
    </location>
</feature>
<keyword id="KW-0396">Initiation factor</keyword>
<keyword id="KW-0648">Protein biosynthesis</keyword>
<comment type="function">
    <text evidence="1">Seems to be required for maximal rate of protein biosynthesis. Enhances ribosome dissociation into subunits and stabilizes the binding of the initiator Met-tRNA(I) to 40 S ribosomal subunits.</text>
</comment>
<comment type="similarity">
    <text evidence="1">Belongs to the eIF-1A family.</text>
</comment>
<sequence>MPKKDRAQEAPSRDVPKPEEGQTICVVKKMLGGDHLVVLCMDGKERLARIPGKIRKKMWMREGDVVLVGIWDFQPNRCDILYKYGNDEIKRLVNENIISREVIDQLRG</sequence>
<proteinExistence type="inferred from homology"/>
<reference key="1">
    <citation type="journal article" date="2009" name="Proc. Natl. Acad. Sci. U.S.A.">
        <title>Biogeography of the Sulfolobus islandicus pan-genome.</title>
        <authorList>
            <person name="Reno M.L."/>
            <person name="Held N.L."/>
            <person name="Fields C.J."/>
            <person name="Burke P.V."/>
            <person name="Whitaker R.J."/>
        </authorList>
    </citation>
    <scope>NUCLEOTIDE SEQUENCE [LARGE SCALE GENOMIC DNA]</scope>
    <source>
        <strain>M.16.4 / Kamchatka #3</strain>
    </source>
</reference>
<dbReference type="EMBL" id="CP001402">
    <property type="protein sequence ID" value="ACR40825.1"/>
    <property type="molecule type" value="Genomic_DNA"/>
</dbReference>
<dbReference type="RefSeq" id="WP_012710350.1">
    <property type="nucleotide sequence ID" value="NC_012726.1"/>
</dbReference>
<dbReference type="SMR" id="C4KK84"/>
<dbReference type="KEGG" id="sid:M164_0191"/>
<dbReference type="HOGENOM" id="CLU_109098_1_2_2"/>
<dbReference type="Proteomes" id="UP000001479">
    <property type="component" value="Chromosome"/>
</dbReference>
<dbReference type="GO" id="GO:0003723">
    <property type="term" value="F:RNA binding"/>
    <property type="evidence" value="ECO:0007669"/>
    <property type="project" value="InterPro"/>
</dbReference>
<dbReference type="GO" id="GO:0003743">
    <property type="term" value="F:translation initiation factor activity"/>
    <property type="evidence" value="ECO:0007669"/>
    <property type="project" value="UniProtKB-UniRule"/>
</dbReference>
<dbReference type="CDD" id="cd05793">
    <property type="entry name" value="S1_IF1A"/>
    <property type="match status" value="1"/>
</dbReference>
<dbReference type="Gene3D" id="2.40.50.140">
    <property type="entry name" value="Nucleic acid-binding proteins"/>
    <property type="match status" value="1"/>
</dbReference>
<dbReference type="HAMAP" id="MF_00216">
    <property type="entry name" value="aIF_1A"/>
    <property type="match status" value="1"/>
</dbReference>
<dbReference type="InterPro" id="IPR012340">
    <property type="entry name" value="NA-bd_OB-fold"/>
</dbReference>
<dbReference type="InterPro" id="IPR006196">
    <property type="entry name" value="RNA-binding_domain_S1_IF1"/>
</dbReference>
<dbReference type="InterPro" id="IPR001253">
    <property type="entry name" value="TIF_eIF-1A"/>
</dbReference>
<dbReference type="InterPro" id="IPR018104">
    <property type="entry name" value="TIF_eIF-1A_CS"/>
</dbReference>
<dbReference type="NCBIfam" id="TIGR00523">
    <property type="entry name" value="eIF-1A"/>
    <property type="match status" value="1"/>
</dbReference>
<dbReference type="NCBIfam" id="NF003082">
    <property type="entry name" value="PRK04012.1-1"/>
    <property type="match status" value="1"/>
</dbReference>
<dbReference type="NCBIfam" id="NF003084">
    <property type="entry name" value="PRK04012.1-3"/>
    <property type="match status" value="1"/>
</dbReference>
<dbReference type="NCBIfam" id="NF003085">
    <property type="entry name" value="PRK04012.1-5"/>
    <property type="match status" value="1"/>
</dbReference>
<dbReference type="PANTHER" id="PTHR21668">
    <property type="entry name" value="EIF-1A"/>
    <property type="match status" value="1"/>
</dbReference>
<dbReference type="Pfam" id="PF01176">
    <property type="entry name" value="eIF-1a"/>
    <property type="match status" value="1"/>
</dbReference>
<dbReference type="SMART" id="SM00652">
    <property type="entry name" value="eIF1a"/>
    <property type="match status" value="1"/>
</dbReference>
<dbReference type="SUPFAM" id="SSF50249">
    <property type="entry name" value="Nucleic acid-binding proteins"/>
    <property type="match status" value="1"/>
</dbReference>
<dbReference type="PROSITE" id="PS01262">
    <property type="entry name" value="IF1A"/>
    <property type="match status" value="1"/>
</dbReference>
<dbReference type="PROSITE" id="PS50832">
    <property type="entry name" value="S1_IF1_TYPE"/>
    <property type="match status" value="1"/>
</dbReference>
<name>IF1A_SACI6</name>
<protein>
    <recommendedName>
        <fullName evidence="1">Translation initiation factor 1A</fullName>
        <shortName evidence="1">aIF-1A</shortName>
    </recommendedName>
</protein>
<gene>
    <name type="primary">eIF1A</name>
    <name type="ordered locus">M164_0191</name>
</gene>
<accession>C4KK84</accession>